<comment type="function">
    <text evidence="6 7 8 9">Functions as a weak apurinic/apyrimidinic (AP) endodeoxyribonuclease in the DNA base excision repair (BER) pathway of DNA lesions induced by oxidative and alkylating agents (PubMed:23754435, PubMed:28028224, PubMed:29361157, PubMed:32516598). Initiates repair of AP sites in DNA by catalyzing hydrolytic incision of the phosphodiester backbone immediately adjacent to the damage, generating a single-strand break with 5'-deoxyribose phosphate and 3'-hydroxyl ends (PubMed:28028224, PubMed:32516598). Exhibits 3'-5' exonuclease activity on a 3' DNA substrate; nuclease activity is stimulated by interaction with pcna (PubMed:28028224, PubMed:32516598). Has a preference for the 3' recessed ends over blunt-ended substrates, in both the presence and the absence of pcna (PubMed:28028224). Generates single-stranded DNA (ssDNA) via 3'-5' single-strand break (SSB) end resection, thereby promoting a DNA damage response via replication protein A (rpa2)-binding to ssDNA and the recruitment of a checkpoint protein complex, including atr, atr-interacting protein atrip, and rad9, to damage sites following oxidative stress (PubMed:23754435, PubMed:28028224, PubMed:29361157). Plays a role in reversing blocked 3' DNA ends, problematic lesions that preclude DNA synthesis (PubMed:32516598). Required for chek1 phosphorylation induced by hydrogen peroxide but not by stalled replication forks (PubMed:23754435).</text>
</comment>
<comment type="catalytic activity">
    <reaction evidence="7 9">
        <text>Exonucleolytic cleavage in the 3'- to 5'-direction to yield nucleoside 5'-phosphates.</text>
        <dbReference type="EC" id="3.1.11.2"/>
    </reaction>
</comment>
<comment type="cofactor">
    <cofactor evidence="4">
        <name>Mg(2+)</name>
        <dbReference type="ChEBI" id="CHEBI:18420"/>
    </cofactor>
    <cofactor evidence="4">
        <name>Mn(2+)</name>
        <dbReference type="ChEBI" id="CHEBI:29035"/>
    </cofactor>
    <text evidence="4">Probably binds two magnesium or manganese ions per subunit.</text>
</comment>
<comment type="activity regulation">
    <text evidence="7 9">3'-5' nuclease activity is stimulated in presence of pcna.</text>
</comment>
<comment type="subunit">
    <text evidence="6 8">Interacts (via PIP box and GRF-type Zinc finger domain) with pcna; the interaction is required for 3 -5 SSB end resection, assembly of a checkpoint protein complex to SSB sites, and SSB signaling (PubMed:23754435, PubMed:29361157). Interacts with chek1 (PubMed:23754435).</text>
</comment>
<comment type="subcellular location">
    <subcellularLocation>
        <location evidence="4 6">Nucleus</location>
    </subcellularLocation>
    <subcellularLocation>
        <location evidence="6">Chromosome</location>
    </subcellularLocation>
    <subcellularLocation>
        <location evidence="4">Cytoplasm</location>
    </subcellularLocation>
    <subcellularLocation>
        <location evidence="4">Mitochondrion</location>
    </subcellularLocation>
    <text evidence="6">Recruited to chromatin in presence of oxidative DNA damaging agents.</text>
</comment>
<comment type="tissue specificity">
    <text evidence="6">Expressed in eggs (at protein level).</text>
</comment>
<comment type="domain">
    <text evidence="8">The PCNA interacting protein (PIP) box mediates interaction with pcna and recruitment of pcna to DNA single-strand breaks.</text>
</comment>
<comment type="domain">
    <text evidence="7 8">The GRF-type Zinc-finger domain binds single-stranded DNA (ssDNA) with high affinity and regulates the 3'-5' exonuclease activity (PubMed:28028224, PubMed:29361157). Required for the 3'-5' end resection of oxidative DNA damage and activation of the atr-chek1 DNA damage response pathway following oxidative stress (PubMed:28028224).</text>
</comment>
<comment type="similarity">
    <text evidence="4">Belongs to the DNA repair enzymes AP/ExoA family.</text>
</comment>
<keyword id="KW-0002">3D-structure</keyword>
<keyword id="KW-0158">Chromosome</keyword>
<keyword id="KW-0963">Cytoplasm</keyword>
<keyword id="KW-0227">DNA damage</keyword>
<keyword id="KW-0234">DNA repair</keyword>
<keyword id="KW-0238">DNA-binding</keyword>
<keyword id="KW-0255">Endonuclease</keyword>
<keyword id="KW-0378">Hydrolase</keyword>
<keyword id="KW-0460">Magnesium</keyword>
<keyword id="KW-0479">Metal-binding</keyword>
<keyword id="KW-0496">Mitochondrion</keyword>
<keyword id="KW-0540">Nuclease</keyword>
<keyword id="KW-0539">Nucleus</keyword>
<keyword id="KW-1185">Reference proteome</keyword>
<keyword id="KW-0862">Zinc</keyword>
<keyword id="KW-0863">Zinc-finger</keyword>
<feature type="chain" id="PRO_0000458224" description="DNA-(apurinic or apyrimidinic site) endonuclease 2">
    <location>
        <begin position="1"/>
        <end position="517"/>
    </location>
</feature>
<feature type="zinc finger region" description="GRF-type" evidence="3">
    <location>
        <begin position="463"/>
        <end position="512"/>
    </location>
</feature>
<feature type="region of interest" description="Disordered" evidence="5">
    <location>
        <begin position="347"/>
        <end position="366"/>
    </location>
</feature>
<feature type="short sequence motif" description="Claspin-like CKB motif" evidence="10">
    <location>
        <begin position="82"/>
        <end position="90"/>
    </location>
</feature>
<feature type="short sequence motif" description="PCNA interacting protein (PIP) box" evidence="6">
    <location>
        <begin position="395"/>
        <end position="402"/>
    </location>
</feature>
<feature type="compositionally biased region" description="Polar residues" evidence="5">
    <location>
        <begin position="347"/>
        <end position="362"/>
    </location>
</feature>
<feature type="active site" evidence="1">
    <location>
        <position position="142"/>
    </location>
</feature>
<feature type="active site" description="Proton donor/acceptor" evidence="9">
    <location>
        <position position="183"/>
    </location>
</feature>
<feature type="active site" description="Proton acceptor" evidence="2">
    <location>
        <position position="300"/>
    </location>
</feature>
<feature type="binding site" evidence="9 16">
    <location>
        <position position="9"/>
    </location>
    <ligand>
        <name>Mg(2+)</name>
        <dbReference type="ChEBI" id="CHEBI:18420"/>
    </ligand>
</feature>
<feature type="binding site" evidence="2 9 16">
    <location>
        <position position="34"/>
    </location>
    <ligand>
        <name>Mg(2+)</name>
        <dbReference type="ChEBI" id="CHEBI:18420"/>
    </ligand>
</feature>
<feature type="binding site" evidence="2">
    <location>
        <position position="183"/>
    </location>
    <ligand>
        <name>Mg(2+)</name>
        <dbReference type="ChEBI" id="CHEBI:18420"/>
    </ligand>
</feature>
<feature type="binding site" evidence="2">
    <location>
        <position position="185"/>
    </location>
    <ligand>
        <name>Mg(2+)</name>
        <dbReference type="ChEBI" id="CHEBI:18420"/>
    </ligand>
</feature>
<feature type="binding site" evidence="2 9 16">
    <location>
        <position position="299"/>
    </location>
    <ligand>
        <name>Mg(2+)</name>
        <dbReference type="ChEBI" id="CHEBI:18420"/>
    </ligand>
</feature>
<feature type="binding site" evidence="2">
    <location>
        <position position="300"/>
    </location>
    <ligand>
        <name>Mg(2+)</name>
        <dbReference type="ChEBI" id="CHEBI:18420"/>
    </ligand>
</feature>
<feature type="binding site" evidence="3 7 15">
    <location>
        <position position="463"/>
    </location>
    <ligand>
        <name>Zn(2+)</name>
        <dbReference type="ChEBI" id="CHEBI:29105"/>
    </ligand>
</feature>
<feature type="binding site" evidence="3 7 15">
    <location>
        <position position="466"/>
    </location>
    <ligand>
        <name>Zn(2+)</name>
        <dbReference type="ChEBI" id="CHEBI:29105"/>
    </ligand>
</feature>
<feature type="binding site" evidence="3 7 15">
    <location>
        <position position="489"/>
    </location>
    <ligand>
        <name>Zn(2+)</name>
        <dbReference type="ChEBI" id="CHEBI:29105"/>
    </ligand>
</feature>
<feature type="binding site" evidence="3 7 15">
    <location>
        <position position="503"/>
    </location>
    <ligand>
        <name>Zn(2+)</name>
        <dbReference type="ChEBI" id="CHEBI:29105"/>
    </ligand>
</feature>
<feature type="site" description="Transition state stabilizer" evidence="1">
    <location>
        <position position="185"/>
    </location>
</feature>
<feature type="site" description="Important for catalytic activity" evidence="1">
    <location>
        <position position="273"/>
    </location>
</feature>
<feature type="site" description="Interaction with DNA substrate" evidence="1">
    <location>
        <position position="300"/>
    </location>
</feature>
<feature type="mutagenesis site" description="Failure to recruit of rpa2 and the checkpoint complex (atr, atrip, and rad9) onto damaged chromatin. Normal association with hydrogen peroxide-damaged chromatin." evidence="6">
    <original>E</original>
    <variation>A</variation>
    <location>
        <position position="34"/>
    </location>
</feature>
<feature type="mutagenesis site" description="Abolished 3'-5' exonuclease activity." evidence="9">
    <original>E</original>
    <variation>Q</variation>
    <location>
        <position position="34"/>
    </location>
</feature>
<feature type="mutagenesis site" description="Loss of chek1 interaction. Loss of chek1 phosphorylation at Ser-344." evidence="6">
    <original>S</original>
    <variation>A</variation>
    <location>
        <position position="86"/>
    </location>
</feature>
<feature type="mutagenesis site" description="Abolished 3'-5' exonuclease activity." evidence="9">
    <original>D</original>
    <variation>N</variation>
    <location>
        <position position="183"/>
    </location>
</feature>
<feature type="mutagenesis site" description="Failure to recruit of rpa2 and the checkpoint complex (atr, trip, and rad9) onto damaged chromatin. Normal association with hydrogen peroxide-damaged chromatin." evidence="6">
    <original>D</original>
    <variation>A</variation>
    <location>
        <position position="273"/>
    </location>
</feature>
<feature type="mutagenesis site" description="Loss of interaction with pcna. Loss of association with hydrogen peroxide-damaged chromatin. Failure to recruit rpa2 and the checkpoint complex (atr, atrip, and rad9) onto damaged chromatin. Loss of chek1 phosphorylation at Ser-344." evidence="6">
    <original>FF</original>
    <variation>AA</variation>
    <location>
        <begin position="401"/>
        <end position="402"/>
    </location>
</feature>
<feature type="mutagenesis site" description="Reduced interaction with pcna. No impact on binding to ssDNA. Failure to recruit checkpoint proteins rpa2-a, atr, atrip, topbp1 and rad9a.L to DNA single strand breaks." evidence="8">
    <original>C</original>
    <variation>A</variation>
    <location>
        <position position="470"/>
    </location>
</feature>
<feature type="mutagenesis site" description="Impaired binding to ssDNA. Impaired nucleolytic activity in the absence of pcna." evidence="7">
    <original>R</original>
    <variation>A</variation>
    <location>
        <position position="473"/>
    </location>
</feature>
<feature type="mutagenesis site" description="Impaired binding to ssDNA. Impaired nucleolytic activity in the absence of pcna, but only reduced nucleolytic activity in presence of pcna." evidence="7">
    <original>R</original>
    <variation>E</variation>
    <location>
        <position position="473"/>
    </location>
</feature>
<feature type="mutagenesis site" description="Impaired binding to ssDNA. Impaired nucleolytic activity in the absence of pcna, but only reduced nucleolytic activity in presence of pcna." evidence="7">
    <original>K</original>
    <variation>A</variation>
    <location>
        <position position="477"/>
    </location>
</feature>
<feature type="mutagenesis site" description="Impaired binding to ssDNA. Impaired nucleolytic activity in the absence of pcna, but only reduced nucleolytic activity in presence of pcna." evidence="7">
    <original>K</original>
    <variation>E</variation>
    <location>
        <position position="477"/>
    </location>
</feature>
<feature type="mutagenesis site" description="Reduced interaction with pcna. Deficient in binding to ssDNA. Loss of SSB- or hydrogen peroxide-induced chek1 phosphorylation." evidence="8">
    <original>GR</original>
    <variation>AA</variation>
    <location>
        <begin position="483"/>
        <end position="484"/>
    </location>
</feature>
<feature type="mutagenesis site" description="Reduced interaction with pcna. No impact on binding to ssDNA." evidence="8">
    <original>FY</original>
    <variation>AA</variation>
    <location>
        <begin position="486"/>
        <end position="487"/>
    </location>
</feature>
<feature type="mutagenesis site" description="No impact on interaction with pcna. Impaired binding to ssDNA. Abolished 3'-5' exonuclease activity in absence of pcna, but only reduced 3'-5' exonuclease activity in presence of pcna." evidence="7 8">
    <original>R</original>
    <variation>A</variation>
    <location>
        <position position="502"/>
    </location>
</feature>
<feature type="mutagenesis site" description="Impaired binding to ssDNA. Abolished 3'-5' exonuclease activity in absence and presence of pcna. Does not impair endodeoxyribonuclease activity. Loss of hydrogen peroxide-induced chek1 phosphorylation. Failure to recruit rpa3, atr, atrip, and rad9 onto damaged chromatin." evidence="7">
    <original>R</original>
    <variation>E</variation>
    <location>
        <position position="502"/>
    </location>
</feature>
<feature type="strand" evidence="18">
    <location>
        <begin position="2"/>
        <end position="7"/>
    </location>
</feature>
<feature type="helix" evidence="18">
    <location>
        <begin position="12"/>
        <end position="14"/>
    </location>
</feature>
<feature type="helix" evidence="18">
    <location>
        <begin position="18"/>
        <end position="25"/>
    </location>
</feature>
<feature type="strand" evidence="18">
    <location>
        <begin position="28"/>
        <end position="33"/>
    </location>
</feature>
<feature type="helix" evidence="18">
    <location>
        <begin position="39"/>
        <end position="41"/>
    </location>
</feature>
<feature type="helix" evidence="18">
    <location>
        <begin position="44"/>
        <end position="47"/>
    </location>
</feature>
<feature type="strand" evidence="18">
    <location>
        <begin position="53"/>
        <end position="57"/>
    </location>
</feature>
<feature type="strand" evidence="18">
    <location>
        <begin position="60"/>
        <end position="62"/>
    </location>
</feature>
<feature type="strand" evidence="18">
    <location>
        <begin position="68"/>
        <end position="72"/>
    </location>
</feature>
<feature type="helix" evidence="18">
    <location>
        <begin position="74"/>
        <end position="76"/>
    </location>
</feature>
<feature type="strand" evidence="18">
    <location>
        <begin position="79"/>
        <end position="87"/>
    </location>
</feature>
<feature type="helix" evidence="18">
    <location>
        <begin position="107"/>
        <end position="114"/>
    </location>
</feature>
<feature type="strand" evidence="18">
    <location>
        <begin position="119"/>
        <end position="127"/>
    </location>
</feature>
<feature type="strand" evidence="18">
    <location>
        <begin position="133"/>
        <end position="142"/>
    </location>
</feature>
<feature type="helix" evidence="18">
    <location>
        <begin position="152"/>
        <end position="173"/>
    </location>
</feature>
<feature type="strand" evidence="18">
    <location>
        <begin position="175"/>
        <end position="183"/>
    </location>
</feature>
<feature type="helix" evidence="18">
    <location>
        <begin position="190"/>
        <end position="192"/>
    </location>
</feature>
<feature type="helix" evidence="18">
    <location>
        <begin position="202"/>
        <end position="204"/>
    </location>
</feature>
<feature type="helix" evidence="18">
    <location>
        <begin position="206"/>
        <end position="214"/>
    </location>
</feature>
<feature type="strand" evidence="18">
    <location>
        <begin position="238"/>
        <end position="241"/>
    </location>
</feature>
<feature type="helix" evidence="18">
    <location>
        <begin position="242"/>
        <end position="246"/>
    </location>
</feature>
<feature type="helix" evidence="18">
    <location>
        <begin position="263"/>
        <end position="266"/>
    </location>
</feature>
<feature type="strand" evidence="18">
    <location>
        <begin position="273"/>
        <end position="278"/>
    </location>
</feature>
<feature type="helix" evidence="18">
    <location>
        <begin position="279"/>
        <end position="285"/>
    </location>
</feature>
<feature type="strand" evidence="18">
    <location>
        <begin position="286"/>
        <end position="291"/>
    </location>
</feature>
<feature type="strand" evidence="18">
    <location>
        <begin position="297"/>
        <end position="300"/>
    </location>
</feature>
<feature type="strand" evidence="18">
    <location>
        <begin position="303"/>
        <end position="307"/>
    </location>
</feature>
<feature type="strand" evidence="18">
    <location>
        <begin position="310"/>
        <end position="312"/>
    </location>
</feature>
<feature type="helix" evidence="18">
    <location>
        <begin position="322"/>
        <end position="324"/>
    </location>
</feature>
<feature type="helix" evidence="18">
    <location>
        <begin position="326"/>
        <end position="328"/>
    </location>
</feature>
<feature type="turn" evidence="18">
    <location>
        <begin position="331"/>
        <end position="333"/>
    </location>
</feature>
<feature type="helix" evidence="17">
    <location>
        <begin position="446"/>
        <end position="453"/>
    </location>
</feature>
<feature type="turn" evidence="17">
    <location>
        <begin position="464"/>
        <end position="466"/>
    </location>
</feature>
<feature type="strand" evidence="17">
    <location>
        <begin position="471"/>
        <end position="474"/>
    </location>
</feature>
<feature type="strand" evidence="17">
    <location>
        <begin position="479"/>
        <end position="481"/>
    </location>
</feature>
<feature type="strand" evidence="17">
    <location>
        <begin position="485"/>
        <end position="488"/>
    </location>
</feature>
<feature type="strand" evidence="17">
    <location>
        <begin position="506"/>
        <end position="508"/>
    </location>
</feature>
<accession>Q6DDT4</accession>
<organism evidence="12">
    <name type="scientific">Xenopus laevis</name>
    <name type="common">African clawed frog</name>
    <dbReference type="NCBI Taxonomy" id="8355"/>
    <lineage>
        <taxon>Eukaryota</taxon>
        <taxon>Metazoa</taxon>
        <taxon>Chordata</taxon>
        <taxon>Craniata</taxon>
        <taxon>Vertebrata</taxon>
        <taxon>Euteleostomi</taxon>
        <taxon>Amphibia</taxon>
        <taxon>Batrachia</taxon>
        <taxon>Anura</taxon>
        <taxon>Pipoidea</taxon>
        <taxon>Pipidae</taxon>
        <taxon>Xenopodinae</taxon>
        <taxon>Xenopus</taxon>
        <taxon>Xenopus</taxon>
    </lineage>
</organism>
<gene>
    <name evidence="14" type="primary">apex2.L</name>
    <name evidence="13" type="synonym">ape2</name>
    <name evidence="11" type="synonym">apex2</name>
    <name evidence="13" type="synonym">apexl2</name>
    <name evidence="13" type="synonym">xth2</name>
</gene>
<dbReference type="EC" id="3.1.11.2" evidence="7 9"/>
<dbReference type="EMBL" id="BC077433">
    <property type="protein sequence ID" value="AAH77433.1"/>
    <property type="molecule type" value="mRNA"/>
</dbReference>
<dbReference type="RefSeq" id="NP_001086779.1">
    <property type="nucleotide sequence ID" value="NM_001093310.1"/>
</dbReference>
<dbReference type="PDB" id="5U6Z">
    <property type="method" value="X-ray"/>
    <property type="resolution" value="2.60 A"/>
    <property type="chains" value="A=446-517"/>
</dbReference>
<dbReference type="PDB" id="6WCD">
    <property type="method" value="X-ray"/>
    <property type="resolution" value="1.54 A"/>
    <property type="chains" value="A=1-355"/>
</dbReference>
<dbReference type="PDBsum" id="5U6Z"/>
<dbReference type="PDBsum" id="6WCD"/>
<dbReference type="SMR" id="Q6DDT4"/>
<dbReference type="DNASU" id="446614"/>
<dbReference type="GeneID" id="446614"/>
<dbReference type="KEGG" id="xla:446614"/>
<dbReference type="AGR" id="Xenbase:XB-GENE-1012061"/>
<dbReference type="CTD" id="446614"/>
<dbReference type="Xenbase" id="XB-GENE-1012061">
    <property type="gene designation" value="apex2.L"/>
</dbReference>
<dbReference type="OrthoDB" id="391817at2759"/>
<dbReference type="Proteomes" id="UP000186698">
    <property type="component" value="Chromosome 8L"/>
</dbReference>
<dbReference type="Bgee" id="446614">
    <property type="expression patterns" value="Expressed in oocyte and 19 other cell types or tissues"/>
</dbReference>
<dbReference type="GO" id="GO:0005694">
    <property type="term" value="C:chromosome"/>
    <property type="evidence" value="ECO:0007669"/>
    <property type="project" value="UniProtKB-SubCell"/>
</dbReference>
<dbReference type="GO" id="GO:0005739">
    <property type="term" value="C:mitochondrion"/>
    <property type="evidence" value="ECO:0007669"/>
    <property type="project" value="UniProtKB-SubCell"/>
</dbReference>
<dbReference type="GO" id="GO:0005634">
    <property type="term" value="C:nucleus"/>
    <property type="evidence" value="ECO:0000318"/>
    <property type="project" value="GO_Central"/>
</dbReference>
<dbReference type="GO" id="GO:0003677">
    <property type="term" value="F:DNA binding"/>
    <property type="evidence" value="ECO:0007669"/>
    <property type="project" value="UniProtKB-KW"/>
</dbReference>
<dbReference type="GO" id="GO:0003906">
    <property type="term" value="F:DNA-(apurinic or apyrimidinic site) endonuclease activity"/>
    <property type="evidence" value="ECO:0000318"/>
    <property type="project" value="GO_Central"/>
</dbReference>
<dbReference type="GO" id="GO:0008311">
    <property type="term" value="F:double-stranded DNA 3'-5' DNA exonuclease activity"/>
    <property type="evidence" value="ECO:0000318"/>
    <property type="project" value="GO_Central"/>
</dbReference>
<dbReference type="GO" id="GO:0004519">
    <property type="term" value="F:endonuclease activity"/>
    <property type="evidence" value="ECO:0007669"/>
    <property type="project" value="UniProtKB-KW"/>
</dbReference>
<dbReference type="GO" id="GO:0008081">
    <property type="term" value="F:phosphoric diester hydrolase activity"/>
    <property type="evidence" value="ECO:0000318"/>
    <property type="project" value="GO_Central"/>
</dbReference>
<dbReference type="GO" id="GO:0008270">
    <property type="term" value="F:zinc ion binding"/>
    <property type="evidence" value="ECO:0007669"/>
    <property type="project" value="UniProtKB-KW"/>
</dbReference>
<dbReference type="GO" id="GO:0006284">
    <property type="term" value="P:base-excision repair"/>
    <property type="evidence" value="ECO:0000318"/>
    <property type="project" value="GO_Central"/>
</dbReference>
<dbReference type="CDD" id="cd09088">
    <property type="entry name" value="Ape2-like_AP-endo"/>
    <property type="match status" value="1"/>
</dbReference>
<dbReference type="FunFam" id="3.60.10.10:FF:000030">
    <property type="entry name" value="DNA-(apurinic or apyrimidinic site) lyase"/>
    <property type="match status" value="1"/>
</dbReference>
<dbReference type="Gene3D" id="3.60.10.10">
    <property type="entry name" value="Endonuclease/exonuclease/phosphatase"/>
    <property type="match status" value="1"/>
</dbReference>
<dbReference type="InterPro" id="IPR004808">
    <property type="entry name" value="AP_endonuc_1"/>
</dbReference>
<dbReference type="InterPro" id="IPR020847">
    <property type="entry name" value="AP_endonuclease_F1_BS"/>
</dbReference>
<dbReference type="InterPro" id="IPR036691">
    <property type="entry name" value="Endo/exonu/phosph_ase_sf"/>
</dbReference>
<dbReference type="InterPro" id="IPR005135">
    <property type="entry name" value="Endo/exonuclease/phosphatase"/>
</dbReference>
<dbReference type="InterPro" id="IPR010666">
    <property type="entry name" value="Znf_GRF"/>
</dbReference>
<dbReference type="NCBIfam" id="TIGR00633">
    <property type="entry name" value="xth"/>
    <property type="match status" value="1"/>
</dbReference>
<dbReference type="PANTHER" id="PTHR22748">
    <property type="entry name" value="AP ENDONUCLEASE"/>
    <property type="match status" value="1"/>
</dbReference>
<dbReference type="PANTHER" id="PTHR22748:SF27">
    <property type="entry name" value="DNA-(APURINIC OR APYRIMIDINIC SITE) ENDONUCLEASE 2"/>
    <property type="match status" value="1"/>
</dbReference>
<dbReference type="Pfam" id="PF03372">
    <property type="entry name" value="Exo_endo_phos"/>
    <property type="match status" value="1"/>
</dbReference>
<dbReference type="Pfam" id="PF06839">
    <property type="entry name" value="Zn_ribbon_GRF"/>
    <property type="match status" value="1"/>
</dbReference>
<dbReference type="SUPFAM" id="SSF56219">
    <property type="entry name" value="DNase I-like"/>
    <property type="match status" value="1"/>
</dbReference>
<dbReference type="PROSITE" id="PS00726">
    <property type="entry name" value="AP_NUCLEASE_F1_1"/>
    <property type="match status" value="1"/>
</dbReference>
<dbReference type="PROSITE" id="PS51435">
    <property type="entry name" value="AP_NUCLEASE_F1_4"/>
    <property type="match status" value="1"/>
</dbReference>
<dbReference type="PROSITE" id="PS51999">
    <property type="entry name" value="ZF_GRF"/>
    <property type="match status" value="1"/>
</dbReference>
<evidence type="ECO:0000250" key="1">
    <source>
        <dbReference type="UniProtKB" id="P27695"/>
    </source>
</evidence>
<evidence type="ECO:0000255" key="2">
    <source>
        <dbReference type="PROSITE-ProRule" id="PRU00764"/>
    </source>
</evidence>
<evidence type="ECO:0000255" key="3">
    <source>
        <dbReference type="PROSITE-ProRule" id="PRU01343"/>
    </source>
</evidence>
<evidence type="ECO:0000255" key="4">
    <source>
        <dbReference type="RuleBase" id="RU362131"/>
    </source>
</evidence>
<evidence type="ECO:0000256" key="5">
    <source>
        <dbReference type="SAM" id="MobiDB-lite"/>
    </source>
</evidence>
<evidence type="ECO:0000269" key="6">
    <source>
    </source>
</evidence>
<evidence type="ECO:0000269" key="7">
    <source>
    </source>
</evidence>
<evidence type="ECO:0000269" key="8">
    <source>
    </source>
</evidence>
<evidence type="ECO:0000269" key="9">
    <source>
    </source>
</evidence>
<evidence type="ECO:0000303" key="10">
    <source>
    </source>
</evidence>
<evidence type="ECO:0000312" key="11">
    <source>
        <dbReference type="EMBL" id="AAH77433.1"/>
    </source>
</evidence>
<evidence type="ECO:0000312" key="12">
    <source>
        <dbReference type="Proteomes" id="UP000186698"/>
    </source>
</evidence>
<evidence type="ECO:0000312" key="13">
    <source>
        <dbReference type="RefSeq" id="NP_001086779.1"/>
    </source>
</evidence>
<evidence type="ECO:0000312" key="14">
    <source>
        <dbReference type="Xenbase" id="XB-GENE-1012061"/>
    </source>
</evidence>
<evidence type="ECO:0007744" key="15">
    <source>
        <dbReference type="PDB" id="5U6Z"/>
    </source>
</evidence>
<evidence type="ECO:0007744" key="16">
    <source>
        <dbReference type="PDB" id="6WCD"/>
    </source>
</evidence>
<evidence type="ECO:0007829" key="17">
    <source>
        <dbReference type="PDB" id="5U6Z"/>
    </source>
</evidence>
<evidence type="ECO:0007829" key="18">
    <source>
        <dbReference type="PDB" id="6WCD"/>
    </source>
</evidence>
<protein>
    <recommendedName>
        <fullName evidence="4">DNA-(apurinic or apyrimidinic site) endonuclease 2</fullName>
        <ecNumber evidence="7 9">3.1.11.2</ecNumber>
    </recommendedName>
</protein>
<proteinExistence type="evidence at protein level"/>
<sequence length="517" mass="57726">MKIVSWNINGIRATRVGLKETLDSLDADIICLQETKVTRDLLDEPSAIVEGYNSYFSFSRVRSGYSGVATFCKSSTTPQAAEEGLSGVFCNRTGSVGCYGNTEQFLEEELQSLDQEGRAVLTQHRILNCEDKEETLTVINVYCPRADPEKPERKTYKLRFYHLLQTRAEAILQNGGHVIILGDVNTSHRPLDHCDPTDLETFEENPGRQWLNQFLGDPIPSQKGDSETVMPPSAGSGLFYDSFRYFHPTQKNAFTCWCSASGARQTNYGTRIDYILGNRELVESEFLDSVIMPEVEGSDHCPVKAFMKCQPIAANKCPPLCTKYLPEFAGRQQKLLQFLVKKENTLGNTTEESSELTGTPSFTEGADISTVRKRPSDKLNSTSKKKSKIVTKNGQGNLLSFFKPERQKLTMATECNPIEVPICKKEKTVQKDLQPATPAVKYNKPQTAFWKSLLKGPPPPPNCKGHSEPCVLRTVKKAGPNCGRQFYVCARPEGHSSNPQARCNFFLWLTKKAGCED</sequence>
<reference evidence="13" key="1">
    <citation type="journal article" date="2013" name="Proc. Natl. Acad. Sci. U.S.A.">
        <title>APE2 is required for ATR-Chk1 checkpoint activation in response to oxidative stress.</title>
        <authorList>
            <person name="Willis J."/>
            <person name="Patel Y."/>
            <person name="Lentz B.L."/>
            <person name="Yan S."/>
        </authorList>
    </citation>
    <scope>NUCLEOTIDE SEQUENCE [MRNA]</scope>
    <scope>FUNCTION</scope>
    <scope>INTERACTION WITH PCNA AND CHEK1</scope>
    <scope>SUBCELLULAR LOCATION</scope>
    <scope>TISSUE SPECIFICITY</scope>
    <scope>MUTAGENESIS OF GLU-34; SER-86; ASP-273; PHE-401 AND PHE-402</scope>
</reference>
<reference evidence="13" key="2">
    <citation type="journal article" date="2018" name="Nucleic Acids Res.">
        <title>APE2 promotes DNA damage response pathway from a single-strand break.</title>
        <authorList>
            <person name="Lin Y."/>
            <person name="Bai L."/>
            <person name="Cupello S."/>
            <person name="Hossain M.A."/>
            <person name="Deem B."/>
            <person name="McLeod M."/>
            <person name="Raj J."/>
            <person name="Yan S."/>
        </authorList>
    </citation>
    <scope>NUCLEOTIDE SEQUENCE [MRNA]</scope>
    <scope>FUNCTION</scope>
    <scope>INTERACTION WITH PCNA</scope>
    <scope>DOMAIN</scope>
    <scope>MUTAGENESIS OF CYS-470; 483-GLY-ARG-484; 486-PHE-TYR-487 AND ARG-502</scope>
</reference>
<reference evidence="12" key="3">
    <citation type="submission" date="2002-12" db="EMBL/GenBank/DDBJ databases">
        <authorList>
            <consortium name="NIH - Xenopus Gene Collection (XGC) project"/>
        </authorList>
    </citation>
    <scope>NUCLEOTIDE SEQUENCE [LARGE SCALE MRNA]</scope>
    <source>
        <tissue evidence="12">Kidney</tissue>
    </source>
</reference>
<reference evidence="15" key="4">
    <citation type="journal article" date="2017" name="Proc. Natl. Acad. Sci. U.S.A.">
        <title>APE2 Zf-GRF facilitates 3'-5' resection of DNA damage following oxidative stress.</title>
        <authorList>
            <person name="Wallace B.D."/>
            <person name="Berman Z."/>
            <person name="Mueller G.A."/>
            <person name="Lin Y."/>
            <person name="Chang T."/>
            <person name="Andres S.N."/>
            <person name="Wojtaszek J.L."/>
            <person name="DeRose E.F."/>
            <person name="Appel C.D."/>
            <person name="London R.E."/>
            <person name="Yan S."/>
            <person name="Williams R.S."/>
        </authorList>
    </citation>
    <scope>X-RAY CRYSTALLOGRAPHY (2.60 ANGSTROMS) OF 446-517 IN COMPLEX WITH ZINC</scope>
    <scope>FUNCTION</scope>
    <scope>CATALYTIC ACTIVITY</scope>
    <scope>DOMAIN</scope>
    <scope>MUTAGENESIS OF ARG-473; LYS-477 AND ARG-502</scope>
</reference>
<reference evidence="16" key="5">
    <citation type="journal article" date="2020" name="Mol. Cell">
        <title>Endogenous DNA 3' Blocks Are Vulnerabilities for BRCA1 and BRCA2 Deficiency and Are Reversed by the APE2 Nuclease.</title>
        <authorList>
            <person name="Alvarez-Quilon A."/>
            <person name="Wojtaszek J.L."/>
            <person name="Mathieu M.C."/>
            <person name="Patel T."/>
            <person name="Appel C.D."/>
            <person name="Hustedt N."/>
            <person name="Rossi S.E."/>
            <person name="Wallace B.D."/>
            <person name="Setiaputra D."/>
            <person name="Adam S."/>
            <person name="Ohashi Y."/>
            <person name="Melo H."/>
            <person name="Cho T."/>
            <person name="Gervais C."/>
            <person name="Munoz I.M."/>
            <person name="Grazzini E."/>
            <person name="Young J.T.F."/>
            <person name="Rouse J."/>
            <person name="Zinda M."/>
            <person name="Williams R.S."/>
            <person name="Durocher D."/>
        </authorList>
    </citation>
    <scope>X-RAY CRYSTALLOGRAPHY (1.54 ANGSTROMS) OF 1-355 IN COMPLEX WITH MAGNESIUM</scope>
    <scope>FUNCTION</scope>
    <scope>CATALYTIC ACTIVITY</scope>
    <scope>MUTAGENESIS OF GLU-34 AND ASP-183</scope>
</reference>
<name>APEX2_XENLA</name>